<accession>Q8NZD1</accession>
<name>SYC_STRP8</name>
<reference key="1">
    <citation type="journal article" date="2002" name="Proc. Natl. Acad. Sci. U.S.A.">
        <title>Genome sequence and comparative microarray analysis of serotype M18 group A Streptococcus strains associated with acute rheumatic fever outbreaks.</title>
        <authorList>
            <person name="Smoot J.C."/>
            <person name="Barbian K.D."/>
            <person name="Van Gompel J.J."/>
            <person name="Smoot L.M."/>
            <person name="Chaussee M.S."/>
            <person name="Sylva G.L."/>
            <person name="Sturdevant D.E."/>
            <person name="Ricklefs S.M."/>
            <person name="Porcella S.F."/>
            <person name="Parkins L.D."/>
            <person name="Beres S.B."/>
            <person name="Campbell D.S."/>
            <person name="Smith T.M."/>
            <person name="Zhang Q."/>
            <person name="Kapur V."/>
            <person name="Daly J.A."/>
            <person name="Veasy L.G."/>
            <person name="Musser J.M."/>
        </authorList>
    </citation>
    <scope>NUCLEOTIDE SEQUENCE [LARGE SCALE GENOMIC DNA]</scope>
    <source>
        <strain>MGAS8232</strain>
    </source>
</reference>
<evidence type="ECO:0000255" key="1">
    <source>
        <dbReference type="HAMAP-Rule" id="MF_00041"/>
    </source>
</evidence>
<dbReference type="EC" id="6.1.1.16" evidence="1"/>
<dbReference type="EMBL" id="AE009949">
    <property type="protein sequence ID" value="AAL98489.1"/>
    <property type="molecule type" value="Genomic_DNA"/>
</dbReference>
<dbReference type="RefSeq" id="WP_011018231.1">
    <property type="nucleotide sequence ID" value="NC_003485.1"/>
</dbReference>
<dbReference type="SMR" id="Q8NZD1"/>
<dbReference type="KEGG" id="spm:spyM18_2008"/>
<dbReference type="HOGENOM" id="CLU_013528_0_1_9"/>
<dbReference type="GO" id="GO:0005829">
    <property type="term" value="C:cytosol"/>
    <property type="evidence" value="ECO:0007669"/>
    <property type="project" value="TreeGrafter"/>
</dbReference>
<dbReference type="GO" id="GO:0005524">
    <property type="term" value="F:ATP binding"/>
    <property type="evidence" value="ECO:0007669"/>
    <property type="project" value="UniProtKB-UniRule"/>
</dbReference>
<dbReference type="GO" id="GO:0004817">
    <property type="term" value="F:cysteine-tRNA ligase activity"/>
    <property type="evidence" value="ECO:0007669"/>
    <property type="project" value="UniProtKB-UniRule"/>
</dbReference>
<dbReference type="GO" id="GO:0008270">
    <property type="term" value="F:zinc ion binding"/>
    <property type="evidence" value="ECO:0007669"/>
    <property type="project" value="UniProtKB-UniRule"/>
</dbReference>
<dbReference type="GO" id="GO:0006423">
    <property type="term" value="P:cysteinyl-tRNA aminoacylation"/>
    <property type="evidence" value="ECO:0007669"/>
    <property type="project" value="UniProtKB-UniRule"/>
</dbReference>
<dbReference type="CDD" id="cd00672">
    <property type="entry name" value="CysRS_core"/>
    <property type="match status" value="1"/>
</dbReference>
<dbReference type="FunFam" id="3.40.50.620:FF:000130">
    <property type="entry name" value="Cysteine--tRNA ligase"/>
    <property type="match status" value="1"/>
</dbReference>
<dbReference type="Gene3D" id="1.20.120.640">
    <property type="entry name" value="Anticodon-binding domain of a subclass of class I aminoacyl-tRNA synthetases"/>
    <property type="match status" value="1"/>
</dbReference>
<dbReference type="Gene3D" id="3.40.50.620">
    <property type="entry name" value="HUPs"/>
    <property type="match status" value="1"/>
</dbReference>
<dbReference type="HAMAP" id="MF_00041">
    <property type="entry name" value="Cys_tRNA_synth"/>
    <property type="match status" value="1"/>
</dbReference>
<dbReference type="InterPro" id="IPR015803">
    <property type="entry name" value="Cys-tRNA-ligase"/>
</dbReference>
<dbReference type="InterPro" id="IPR015273">
    <property type="entry name" value="Cys-tRNA-synt_Ia_DALR"/>
</dbReference>
<dbReference type="InterPro" id="IPR024909">
    <property type="entry name" value="Cys-tRNA/MSH_ligase"/>
</dbReference>
<dbReference type="InterPro" id="IPR056411">
    <property type="entry name" value="CysS_C"/>
</dbReference>
<dbReference type="InterPro" id="IPR014729">
    <property type="entry name" value="Rossmann-like_a/b/a_fold"/>
</dbReference>
<dbReference type="InterPro" id="IPR032678">
    <property type="entry name" value="tRNA-synt_1_cat_dom"/>
</dbReference>
<dbReference type="InterPro" id="IPR009080">
    <property type="entry name" value="tRNAsynth_Ia_anticodon-bd"/>
</dbReference>
<dbReference type="NCBIfam" id="TIGR00435">
    <property type="entry name" value="cysS"/>
    <property type="match status" value="1"/>
</dbReference>
<dbReference type="PANTHER" id="PTHR10890:SF3">
    <property type="entry name" value="CYSTEINE--TRNA LIGASE, CYTOPLASMIC"/>
    <property type="match status" value="1"/>
</dbReference>
<dbReference type="PANTHER" id="PTHR10890">
    <property type="entry name" value="CYSTEINYL-TRNA SYNTHETASE"/>
    <property type="match status" value="1"/>
</dbReference>
<dbReference type="Pfam" id="PF23493">
    <property type="entry name" value="CysS_C"/>
    <property type="match status" value="1"/>
</dbReference>
<dbReference type="Pfam" id="PF09190">
    <property type="entry name" value="DALR_2"/>
    <property type="match status" value="1"/>
</dbReference>
<dbReference type="Pfam" id="PF01406">
    <property type="entry name" value="tRNA-synt_1e"/>
    <property type="match status" value="1"/>
</dbReference>
<dbReference type="PRINTS" id="PR00983">
    <property type="entry name" value="TRNASYNTHCYS"/>
</dbReference>
<dbReference type="SMART" id="SM00840">
    <property type="entry name" value="DALR_2"/>
    <property type="match status" value="1"/>
</dbReference>
<dbReference type="SUPFAM" id="SSF47323">
    <property type="entry name" value="Anticodon-binding domain of a subclass of class I aminoacyl-tRNA synthetases"/>
    <property type="match status" value="1"/>
</dbReference>
<dbReference type="SUPFAM" id="SSF52374">
    <property type="entry name" value="Nucleotidylyl transferase"/>
    <property type="match status" value="1"/>
</dbReference>
<protein>
    <recommendedName>
        <fullName evidence="1">Cysteine--tRNA ligase</fullName>
        <ecNumber evidence="1">6.1.1.16</ecNumber>
    </recommendedName>
    <alternativeName>
        <fullName evidence="1">Cysteinyl-tRNA synthetase</fullName>
        <shortName evidence="1">CysRS</shortName>
    </alternativeName>
</protein>
<comment type="catalytic activity">
    <reaction evidence="1">
        <text>tRNA(Cys) + L-cysteine + ATP = L-cysteinyl-tRNA(Cys) + AMP + diphosphate</text>
        <dbReference type="Rhea" id="RHEA:17773"/>
        <dbReference type="Rhea" id="RHEA-COMP:9661"/>
        <dbReference type="Rhea" id="RHEA-COMP:9679"/>
        <dbReference type="ChEBI" id="CHEBI:30616"/>
        <dbReference type="ChEBI" id="CHEBI:33019"/>
        <dbReference type="ChEBI" id="CHEBI:35235"/>
        <dbReference type="ChEBI" id="CHEBI:78442"/>
        <dbReference type="ChEBI" id="CHEBI:78517"/>
        <dbReference type="ChEBI" id="CHEBI:456215"/>
        <dbReference type="EC" id="6.1.1.16"/>
    </reaction>
</comment>
<comment type="cofactor">
    <cofactor evidence="1">
        <name>Zn(2+)</name>
        <dbReference type="ChEBI" id="CHEBI:29105"/>
    </cofactor>
    <text evidence="1">Binds 1 zinc ion per subunit.</text>
</comment>
<comment type="subunit">
    <text evidence="1">Monomer.</text>
</comment>
<comment type="subcellular location">
    <subcellularLocation>
        <location evidence="1">Cytoplasm</location>
    </subcellularLocation>
</comment>
<comment type="similarity">
    <text evidence="1">Belongs to the class-I aminoacyl-tRNA synthetase family.</text>
</comment>
<gene>
    <name evidence="1" type="primary">cysS</name>
    <name type="ordered locus">spyM18_2008</name>
</gene>
<feature type="chain" id="PRO_0000159498" description="Cysteine--tRNA ligase">
    <location>
        <begin position="1"/>
        <end position="447"/>
    </location>
</feature>
<feature type="short sequence motif" description="'HIGH' region">
    <location>
        <begin position="30"/>
        <end position="40"/>
    </location>
</feature>
<feature type="short sequence motif" description="'KMSKS' region">
    <location>
        <begin position="268"/>
        <end position="272"/>
    </location>
</feature>
<feature type="binding site" evidence="1">
    <location>
        <position position="28"/>
    </location>
    <ligand>
        <name>Zn(2+)</name>
        <dbReference type="ChEBI" id="CHEBI:29105"/>
    </ligand>
</feature>
<feature type="binding site" evidence="1">
    <location>
        <position position="211"/>
    </location>
    <ligand>
        <name>Zn(2+)</name>
        <dbReference type="ChEBI" id="CHEBI:29105"/>
    </ligand>
</feature>
<feature type="binding site" evidence="1">
    <location>
        <position position="236"/>
    </location>
    <ligand>
        <name>Zn(2+)</name>
        <dbReference type="ChEBI" id="CHEBI:29105"/>
    </ligand>
</feature>
<feature type="binding site" evidence="1">
    <location>
        <position position="240"/>
    </location>
    <ligand>
        <name>Zn(2+)</name>
        <dbReference type="ChEBI" id="CHEBI:29105"/>
    </ligand>
</feature>
<feature type="binding site" evidence="1">
    <location>
        <position position="271"/>
    </location>
    <ligand>
        <name>ATP</name>
        <dbReference type="ChEBI" id="CHEBI:30616"/>
    </ligand>
</feature>
<keyword id="KW-0030">Aminoacyl-tRNA synthetase</keyword>
<keyword id="KW-0067">ATP-binding</keyword>
<keyword id="KW-0963">Cytoplasm</keyword>
<keyword id="KW-0436">Ligase</keyword>
<keyword id="KW-0479">Metal-binding</keyword>
<keyword id="KW-0547">Nucleotide-binding</keyword>
<keyword id="KW-0648">Protein biosynthesis</keyword>
<keyword id="KW-0862">Zinc</keyword>
<sequence>MIKIYDTMTRSLRKFVPLTENTVNMYVCGPTVYNYIHIGNARSAVAFDTIRRYFEYTGYQVNYISNFTDVDDKIIKAATQAGVSPKELSDRFIAAFIEDTKALGVKPATQNPRVMDYIAEIISFVESLIEKDFAYEADGDVYFRVEKSEHYAKLANKTLSELEVGASGRTDAETALKENPLDFALWKSAKAGEVSWDSPWGFGRPGWHIECSVMATEILGDTIDIHGGGADLEFPHHTNEIAQSEAKTGKTFANYWMHNGFVTVDNEKMSKSLGNFVTVHEMLQTVDGQVLRFFLATQQYRKPINFTEKAIHDAEINLKYLKNTLQQPLTETADEQELKQFVIAFQDAMDDDFNTANGITVVFDMAKWINSGSYTEPVKSAFEKMLAVFGIIFEEEVLEVDIEALIAKRQEARANRDFATADAIRDQLAAQGIKLLDTKDGVRWLRD</sequence>
<proteinExistence type="inferred from homology"/>
<organism>
    <name type="scientific">Streptococcus pyogenes serotype M18 (strain MGAS8232)</name>
    <dbReference type="NCBI Taxonomy" id="186103"/>
    <lineage>
        <taxon>Bacteria</taxon>
        <taxon>Bacillati</taxon>
        <taxon>Bacillota</taxon>
        <taxon>Bacilli</taxon>
        <taxon>Lactobacillales</taxon>
        <taxon>Streptococcaceae</taxon>
        <taxon>Streptococcus</taxon>
    </lineage>
</organism>